<protein>
    <recommendedName>
        <fullName>26S proteasome regulatory subunit RPN12</fullName>
    </recommendedName>
    <alternativeName>
        <fullName>Nuclear integrity protein 1</fullName>
    </alternativeName>
</protein>
<organism>
    <name type="scientific">Saccharomyces cerevisiae (strain ATCC 204508 / S288c)</name>
    <name type="common">Baker's yeast</name>
    <dbReference type="NCBI Taxonomy" id="559292"/>
    <lineage>
        <taxon>Eukaryota</taxon>
        <taxon>Fungi</taxon>
        <taxon>Dikarya</taxon>
        <taxon>Ascomycota</taxon>
        <taxon>Saccharomycotina</taxon>
        <taxon>Saccharomycetes</taxon>
        <taxon>Saccharomycetales</taxon>
        <taxon>Saccharomycetaceae</taxon>
        <taxon>Saccharomyces</taxon>
    </lineage>
</organism>
<feature type="initiator methionine" description="Removed" evidence="2">
    <location>
        <position position="1"/>
    </location>
</feature>
<feature type="chain" id="PRO_0000173851" description="26S proteasome regulatory subunit RPN12">
    <location>
        <begin position="2"/>
        <end position="274"/>
    </location>
</feature>
<feature type="domain" description="PCI" evidence="1">
    <location>
        <begin position="76"/>
        <end position="251"/>
    </location>
</feature>
<feature type="helix" evidence="5">
    <location>
        <begin position="8"/>
        <end position="17"/>
    </location>
</feature>
<feature type="helix" evidence="5">
    <location>
        <begin position="20"/>
        <end position="40"/>
    </location>
</feature>
<feature type="helix" evidence="5">
    <location>
        <begin position="52"/>
        <end position="71"/>
    </location>
</feature>
<feature type="helix" evidence="5">
    <location>
        <begin position="75"/>
        <end position="90"/>
    </location>
</feature>
<feature type="helix" evidence="5">
    <location>
        <begin position="101"/>
        <end position="115"/>
    </location>
</feature>
<feature type="helix" evidence="5">
    <location>
        <begin position="119"/>
        <end position="133"/>
    </location>
</feature>
<feature type="turn" evidence="5">
    <location>
        <begin position="138"/>
        <end position="142"/>
    </location>
</feature>
<feature type="helix" evidence="5">
    <location>
        <begin position="143"/>
        <end position="154"/>
    </location>
</feature>
<feature type="helix" evidence="5">
    <location>
        <begin position="157"/>
        <end position="166"/>
    </location>
</feature>
<feature type="helix" evidence="5">
    <location>
        <begin position="174"/>
        <end position="196"/>
    </location>
</feature>
<feature type="strand" evidence="5">
    <location>
        <begin position="198"/>
        <end position="201"/>
    </location>
</feature>
<feature type="helix" evidence="5">
    <location>
        <begin position="202"/>
        <end position="209"/>
    </location>
</feature>
<feature type="helix" evidence="5">
    <location>
        <begin position="215"/>
        <end position="223"/>
    </location>
</feature>
<feature type="strand" evidence="5">
    <location>
        <begin position="232"/>
        <end position="234"/>
    </location>
</feature>
<feature type="helix" evidence="5">
    <location>
        <begin position="259"/>
        <end position="271"/>
    </location>
</feature>
<proteinExistence type="evidence at protein level"/>
<comment type="function">
    <text>Acts as a regulatory subunit of the 26S proteasome which is involved in the ATP-dependent degradation of ubiquitinated proteins. Necessary for activation of the CDC28 kinase.</text>
</comment>
<comment type="interaction">
    <interactant intactId="EBI-15953">
        <id>P32496</id>
    </interactant>
    <interactant intactId="EBI-36176">
        <id>Q08723</id>
        <label>RPN8</label>
    </interactant>
    <organismsDiffer>false</organismsDiffer>
    <experiments>4</experiments>
</comment>
<comment type="interaction">
    <interactant intactId="EBI-15953">
        <id>P32496</id>
    </interactant>
    <interactant intactId="EBI-13905">
        <id>P33298</id>
        <label>RPT3</label>
    </interactant>
    <organismsDiffer>false</organismsDiffer>
    <experiments>4</experiments>
</comment>
<comment type="miscellaneous">
    <text evidence="3">Present with 9890 molecules/cell in log phase SD medium.</text>
</comment>
<comment type="similarity">
    <text evidence="4">Belongs to the proteasome subunit S14 family.</text>
</comment>
<dbReference type="EMBL" id="D10515">
    <property type="protein sequence ID" value="BAA01390.1"/>
    <property type="molecule type" value="Genomic_DNA"/>
</dbReference>
<dbReference type="EMBL" id="D50617">
    <property type="protein sequence ID" value="BAA09291.1"/>
    <property type="molecule type" value="Genomic_DNA"/>
</dbReference>
<dbReference type="EMBL" id="BK006940">
    <property type="protein sequence ID" value="DAA12495.1"/>
    <property type="molecule type" value="Genomic_DNA"/>
</dbReference>
<dbReference type="PIR" id="S27434">
    <property type="entry name" value="S27434"/>
</dbReference>
<dbReference type="RefSeq" id="NP_116710.1">
    <property type="nucleotide sequence ID" value="NM_001180017.1"/>
</dbReference>
<dbReference type="PDB" id="3J47">
    <property type="method" value="EM"/>
    <property type="chains" value="T=256-272"/>
</dbReference>
<dbReference type="PDB" id="3JCK">
    <property type="method" value="EM"/>
    <property type="resolution" value="3.50 A"/>
    <property type="chains" value="H=1-274"/>
</dbReference>
<dbReference type="PDB" id="3JCO">
    <property type="method" value="EM"/>
    <property type="resolution" value="4.80 A"/>
    <property type="chains" value="T=1-274"/>
</dbReference>
<dbReference type="PDB" id="3JCP">
    <property type="method" value="EM"/>
    <property type="resolution" value="4.60 A"/>
    <property type="chains" value="T=1-274"/>
</dbReference>
<dbReference type="PDB" id="4CR2">
    <property type="method" value="EM"/>
    <property type="resolution" value="7.70 A"/>
    <property type="chains" value="T=1-274"/>
</dbReference>
<dbReference type="PDB" id="4CR3">
    <property type="method" value="EM"/>
    <property type="resolution" value="9.30 A"/>
    <property type="chains" value="T=1-274"/>
</dbReference>
<dbReference type="PDB" id="4CR4">
    <property type="method" value="EM"/>
    <property type="resolution" value="8.80 A"/>
    <property type="chains" value="T=1-274"/>
</dbReference>
<dbReference type="PDB" id="5A5B">
    <property type="method" value="EM"/>
    <property type="resolution" value="9.50 A"/>
    <property type="chains" value="T=1-274"/>
</dbReference>
<dbReference type="PDB" id="5MPB">
    <property type="method" value="EM"/>
    <property type="resolution" value="7.80 A"/>
    <property type="chains" value="T=1-274"/>
</dbReference>
<dbReference type="PDB" id="5MPC">
    <property type="method" value="EM"/>
    <property type="resolution" value="7.70 A"/>
    <property type="chains" value="T=1-274"/>
</dbReference>
<dbReference type="PDB" id="5MPD">
    <property type="method" value="EM"/>
    <property type="resolution" value="4.10 A"/>
    <property type="chains" value="T=1-274"/>
</dbReference>
<dbReference type="PDB" id="5MPE">
    <property type="method" value="EM"/>
    <property type="resolution" value="4.50 A"/>
    <property type="chains" value="T=1-274"/>
</dbReference>
<dbReference type="PDB" id="5WVI">
    <property type="method" value="EM"/>
    <property type="resolution" value="6.30 A"/>
    <property type="chains" value="T=1-274"/>
</dbReference>
<dbReference type="PDB" id="5WVK">
    <property type="method" value="EM"/>
    <property type="resolution" value="4.20 A"/>
    <property type="chains" value="T=1-274"/>
</dbReference>
<dbReference type="PDB" id="6FVT">
    <property type="method" value="EM"/>
    <property type="resolution" value="4.10 A"/>
    <property type="chains" value="T=7-272"/>
</dbReference>
<dbReference type="PDB" id="6FVU">
    <property type="method" value="EM"/>
    <property type="resolution" value="4.50 A"/>
    <property type="chains" value="T=7-272"/>
</dbReference>
<dbReference type="PDB" id="6FVV">
    <property type="method" value="EM"/>
    <property type="resolution" value="5.40 A"/>
    <property type="chains" value="T=7-272"/>
</dbReference>
<dbReference type="PDB" id="6FVW">
    <property type="method" value="EM"/>
    <property type="resolution" value="4.50 A"/>
    <property type="chains" value="T=7-272"/>
</dbReference>
<dbReference type="PDB" id="6FVX">
    <property type="method" value="EM"/>
    <property type="resolution" value="4.90 A"/>
    <property type="chains" value="T=7-272"/>
</dbReference>
<dbReference type="PDB" id="6FVY">
    <property type="method" value="EM"/>
    <property type="resolution" value="6.10 A"/>
    <property type="chains" value="T=7-272"/>
</dbReference>
<dbReference type="PDB" id="6J2C">
    <property type="method" value="EM"/>
    <property type="resolution" value="7.00 A"/>
    <property type="chains" value="T=1-274"/>
</dbReference>
<dbReference type="PDB" id="6J2N">
    <property type="method" value="EM"/>
    <property type="resolution" value="7.50 A"/>
    <property type="chains" value="T=1-274"/>
</dbReference>
<dbReference type="PDB" id="6J2Q">
    <property type="method" value="EM"/>
    <property type="resolution" value="3.80 A"/>
    <property type="chains" value="T=1-274"/>
</dbReference>
<dbReference type="PDB" id="6J2X">
    <property type="method" value="EM"/>
    <property type="resolution" value="3.80 A"/>
    <property type="chains" value="T=1-274"/>
</dbReference>
<dbReference type="PDB" id="6J30">
    <property type="method" value="EM"/>
    <property type="resolution" value="4.50 A"/>
    <property type="chains" value="T=1-274"/>
</dbReference>
<dbReference type="PDB" id="7QO3">
    <property type="method" value="EM"/>
    <property type="resolution" value="6.10 A"/>
    <property type="chains" value="T=1-274"/>
</dbReference>
<dbReference type="PDB" id="7QO5">
    <property type="method" value="EM"/>
    <property type="resolution" value="6.00 A"/>
    <property type="chains" value="T=1-274"/>
</dbReference>
<dbReference type="PDBsum" id="3J47"/>
<dbReference type="PDBsum" id="3JCK"/>
<dbReference type="PDBsum" id="3JCO"/>
<dbReference type="PDBsum" id="3JCP"/>
<dbReference type="PDBsum" id="4CR2"/>
<dbReference type="PDBsum" id="4CR3"/>
<dbReference type="PDBsum" id="4CR4"/>
<dbReference type="PDBsum" id="5A5B"/>
<dbReference type="PDBsum" id="5MPB"/>
<dbReference type="PDBsum" id="5MPC"/>
<dbReference type="PDBsum" id="5MPD"/>
<dbReference type="PDBsum" id="5MPE"/>
<dbReference type="PDBsum" id="5WVI"/>
<dbReference type="PDBsum" id="5WVK"/>
<dbReference type="PDBsum" id="6FVT"/>
<dbReference type="PDBsum" id="6FVU"/>
<dbReference type="PDBsum" id="6FVV"/>
<dbReference type="PDBsum" id="6FVW"/>
<dbReference type="PDBsum" id="6FVX"/>
<dbReference type="PDBsum" id="6FVY"/>
<dbReference type="PDBsum" id="6J2C"/>
<dbReference type="PDBsum" id="6J2N"/>
<dbReference type="PDBsum" id="6J2Q"/>
<dbReference type="PDBsum" id="6J2X"/>
<dbReference type="PDBsum" id="6J30"/>
<dbReference type="PDBsum" id="7QO3"/>
<dbReference type="PDBsum" id="7QO5"/>
<dbReference type="EMDB" id="EMD-14082"/>
<dbReference type="EMDB" id="EMD-14084"/>
<dbReference type="EMDB" id="EMD-3536"/>
<dbReference type="EMDB" id="EMD-3537"/>
<dbReference type="EMDB" id="EMD-4321"/>
<dbReference type="EMDB" id="EMD-4322"/>
<dbReference type="EMDB" id="EMD-4323"/>
<dbReference type="EMDB" id="EMD-4324"/>
<dbReference type="EMDB" id="EMD-6693"/>
<dbReference type="EMDB" id="EMD-6694"/>
<dbReference type="EMDB" id="EMD-9769"/>
<dbReference type="EMDB" id="EMD-9770"/>
<dbReference type="EMDB" id="EMD-9771"/>
<dbReference type="EMDB" id="EMD-9772"/>
<dbReference type="EMDB" id="EMD-9773"/>
<dbReference type="SMR" id="P32496"/>
<dbReference type="BioGRID" id="31210">
    <property type="interactions" value="502"/>
</dbReference>
<dbReference type="ComplexPortal" id="CPX-2262">
    <property type="entry name" value="26S proteasome complex"/>
</dbReference>
<dbReference type="DIP" id="DIP-1575N"/>
<dbReference type="FunCoup" id="P32496">
    <property type="interactions" value="1500"/>
</dbReference>
<dbReference type="IntAct" id="P32496">
    <property type="interactions" value="55"/>
</dbReference>
<dbReference type="MINT" id="P32496"/>
<dbReference type="STRING" id="4932.YFR052W"/>
<dbReference type="iPTMnet" id="P32496"/>
<dbReference type="PaxDb" id="4932-YFR052W"/>
<dbReference type="PeptideAtlas" id="P32496"/>
<dbReference type="EnsemblFungi" id="YFR052W_mRNA">
    <property type="protein sequence ID" value="YFR052W"/>
    <property type="gene ID" value="YFR052W"/>
</dbReference>
<dbReference type="GeneID" id="850613"/>
<dbReference type="KEGG" id="sce:YFR052W"/>
<dbReference type="AGR" id="SGD:S000001948"/>
<dbReference type="SGD" id="S000001948">
    <property type="gene designation" value="RPN12"/>
</dbReference>
<dbReference type="VEuPathDB" id="FungiDB:YFR052W"/>
<dbReference type="eggNOG" id="KOG3151">
    <property type="taxonomic scope" value="Eukaryota"/>
</dbReference>
<dbReference type="GeneTree" id="ENSGT00390000014682"/>
<dbReference type="HOGENOM" id="CLU_046003_1_0_1"/>
<dbReference type="InParanoid" id="P32496"/>
<dbReference type="OMA" id="HKFMGLH"/>
<dbReference type="OrthoDB" id="8775810at2759"/>
<dbReference type="BioCyc" id="YEAST:G3O-30498-MONOMER"/>
<dbReference type="Reactome" id="R-SCE-1236978">
    <property type="pathway name" value="Cross-presentation of soluble exogenous antigens (endosomes)"/>
</dbReference>
<dbReference type="Reactome" id="R-SCE-5668541">
    <property type="pathway name" value="TNFR2 non-canonical NF-kB pathway"/>
</dbReference>
<dbReference type="Reactome" id="R-SCE-5687128">
    <property type="pathway name" value="MAPK6/MAPK4 signaling"/>
</dbReference>
<dbReference type="Reactome" id="R-SCE-5689880">
    <property type="pathway name" value="Ub-specific processing proteases"/>
</dbReference>
<dbReference type="Reactome" id="R-SCE-68949">
    <property type="pathway name" value="Orc1 removal from chromatin"/>
</dbReference>
<dbReference type="Reactome" id="R-SCE-69017">
    <property type="pathway name" value="CDK-mediated phosphorylation and removal of Cdc6"/>
</dbReference>
<dbReference type="Reactome" id="R-SCE-69601">
    <property type="pathway name" value="Ubiquitin Mediated Degradation of Phosphorylated Cdc25A"/>
</dbReference>
<dbReference type="Reactome" id="R-SCE-8854050">
    <property type="pathway name" value="FBXL7 down-regulates AURKA during mitotic entry and in early mitosis"/>
</dbReference>
<dbReference type="Reactome" id="R-SCE-8948751">
    <property type="pathway name" value="Regulation of PTEN stability and activity"/>
</dbReference>
<dbReference type="Reactome" id="R-SCE-8951664">
    <property type="pathway name" value="Neddylation"/>
</dbReference>
<dbReference type="Reactome" id="R-SCE-9755511">
    <property type="pathway name" value="KEAP1-NFE2L2 pathway"/>
</dbReference>
<dbReference type="Reactome" id="R-SCE-983168">
    <property type="pathway name" value="Antigen processing: Ubiquitination &amp; Proteasome degradation"/>
</dbReference>
<dbReference type="Reactome" id="R-SCE-9907900">
    <property type="pathway name" value="Proteasome assembly"/>
</dbReference>
<dbReference type="BioGRID-ORCS" id="850613">
    <property type="hits" value="1 hit in 10 CRISPR screens"/>
</dbReference>
<dbReference type="ChiTaRS" id="RPN12">
    <property type="organism name" value="yeast"/>
</dbReference>
<dbReference type="EvolutionaryTrace" id="P32496"/>
<dbReference type="PRO" id="PR:P32496"/>
<dbReference type="Proteomes" id="UP000002311">
    <property type="component" value="Chromosome VI"/>
</dbReference>
<dbReference type="RNAct" id="P32496">
    <property type="molecule type" value="protein"/>
</dbReference>
<dbReference type="GO" id="GO:0005634">
    <property type="term" value="C:nucleus"/>
    <property type="evidence" value="ECO:0000318"/>
    <property type="project" value="GO_Central"/>
</dbReference>
<dbReference type="GO" id="GO:0000502">
    <property type="term" value="C:proteasome complex"/>
    <property type="evidence" value="ECO:0000353"/>
    <property type="project" value="ComplexPortal"/>
</dbReference>
<dbReference type="GO" id="GO:0008541">
    <property type="term" value="C:proteasome regulatory particle, lid subcomplex"/>
    <property type="evidence" value="ECO:0000314"/>
    <property type="project" value="SGD"/>
</dbReference>
<dbReference type="GO" id="GO:0034515">
    <property type="term" value="C:proteasome storage granule"/>
    <property type="evidence" value="ECO:0000314"/>
    <property type="project" value="SGD"/>
</dbReference>
<dbReference type="GO" id="GO:0043161">
    <property type="term" value="P:proteasome-mediated ubiquitin-dependent protein catabolic process"/>
    <property type="evidence" value="ECO:0000314"/>
    <property type="project" value="ComplexPortal"/>
</dbReference>
<dbReference type="GO" id="GO:0006511">
    <property type="term" value="P:ubiquitin-dependent protein catabolic process"/>
    <property type="evidence" value="ECO:0000315"/>
    <property type="project" value="SGD"/>
</dbReference>
<dbReference type="FunFam" id="1.25.40.990:FF:000001">
    <property type="entry name" value="26S proteasome non-ATPase regulatory subunit"/>
    <property type="match status" value="1"/>
</dbReference>
<dbReference type="Gene3D" id="1.25.40.990">
    <property type="match status" value="1"/>
</dbReference>
<dbReference type="InterPro" id="IPR006746">
    <property type="entry name" value="26S_Psome_Rpn12"/>
</dbReference>
<dbReference type="InterPro" id="IPR033464">
    <property type="entry name" value="CSN8_PSD8_EIF3K"/>
</dbReference>
<dbReference type="InterPro" id="IPR000717">
    <property type="entry name" value="PCI_dom"/>
</dbReference>
<dbReference type="PANTHER" id="PTHR12387">
    <property type="entry name" value="26S PROTEASOME NON-ATPASE REGULATORY SUBUNIT 8"/>
    <property type="match status" value="1"/>
</dbReference>
<dbReference type="PANTHER" id="PTHR12387:SF0">
    <property type="entry name" value="26S PROTEASOME NON-ATPASE REGULATORY SUBUNIT 8"/>
    <property type="match status" value="1"/>
</dbReference>
<dbReference type="Pfam" id="PF10075">
    <property type="entry name" value="CSN8_PSD8_EIF3K"/>
    <property type="match status" value="1"/>
</dbReference>
<dbReference type="PROSITE" id="PS50250">
    <property type="entry name" value="PCI"/>
    <property type="match status" value="1"/>
</dbReference>
<reference key="1">
    <citation type="journal article" date="1992" name="Exp. Cell Res.">
        <title>A new essential gene of Saccharomyces cerevisiae, a defect in it may result in instability of nucleus.</title>
        <authorList>
            <person name="Nisogi H."/>
            <person name="Kominami K."/>
            <person name="Tanaka K."/>
            <person name="Toh-e A."/>
        </authorList>
    </citation>
    <scope>NUCLEOTIDE SEQUENCE [GENOMIC DNA]</scope>
</reference>
<reference key="2">
    <citation type="journal article" date="1995" name="Nat. Genet.">
        <title>Analysis of the nucleotide sequence of chromosome VI from Saccharomyces cerevisiae.</title>
        <authorList>
            <person name="Murakami Y."/>
            <person name="Naitou M."/>
            <person name="Hagiwara H."/>
            <person name="Shibata T."/>
            <person name="Ozawa M."/>
            <person name="Sasanuma S."/>
            <person name="Sasanuma M."/>
            <person name="Tsuchiya Y."/>
            <person name="Soeda E."/>
            <person name="Yokoyama K."/>
            <person name="Yamazaki M."/>
            <person name="Tashiro H."/>
            <person name="Eki T."/>
        </authorList>
    </citation>
    <scope>NUCLEOTIDE SEQUENCE [LARGE SCALE GENOMIC DNA]</scope>
    <source>
        <strain>ATCC 204508 / S288c</strain>
    </source>
</reference>
<reference key="3">
    <citation type="journal article" date="2014" name="G3 (Bethesda)">
        <title>The reference genome sequence of Saccharomyces cerevisiae: Then and now.</title>
        <authorList>
            <person name="Engel S.R."/>
            <person name="Dietrich F.S."/>
            <person name="Fisk D.G."/>
            <person name="Binkley G."/>
            <person name="Balakrishnan R."/>
            <person name="Costanzo M.C."/>
            <person name="Dwight S.S."/>
            <person name="Hitz B.C."/>
            <person name="Karra K."/>
            <person name="Nash R.S."/>
            <person name="Weng S."/>
            <person name="Wong E.D."/>
            <person name="Lloyd P."/>
            <person name="Skrzypek M.S."/>
            <person name="Miyasato S.R."/>
            <person name="Simison M."/>
            <person name="Cherry J.M."/>
        </authorList>
    </citation>
    <scope>GENOME REANNOTATION</scope>
    <source>
        <strain>ATCC 204508 / S288c</strain>
    </source>
</reference>
<reference key="4">
    <citation type="journal article" date="1996" name="Yeast">
        <title>Analysis of a 36.2 kb DNA sequence including the right telomere of chromosome VI from Saccharomyces cerevisiae.</title>
        <authorList>
            <person name="Eki T."/>
            <person name="Naitou M."/>
            <person name="Hagiwara H."/>
            <person name="Ozawa M."/>
            <person name="Sasanuma S."/>
            <person name="Sasanuma M."/>
            <person name="Tsuchiya Y."/>
            <person name="Shibata T."/>
            <person name="Hanaoka F."/>
            <person name="Murakami Y."/>
        </authorList>
    </citation>
    <scope>NUCLEOTIDE SEQUENCE [GENOMIC DNA]</scope>
    <source>
        <strain>ATCC 204511 / S288c / AB972</strain>
    </source>
</reference>
<reference key="5">
    <citation type="journal article" date="1995" name="EMBO J.">
        <title>Nin1p, a regulatory subunit of the 26S proteasome, is necessary for activation of Cdc28p kinase of Saccharomyces cerevisiae.</title>
        <authorList>
            <person name="Kominami K."/>
            <person name="DeMartino G.N."/>
            <person name="Moomaw C."/>
            <person name="Slaughter C.A."/>
            <person name="Shimbara N."/>
            <person name="Fujimuro M."/>
            <person name="Yokosawa H."/>
            <person name="Hisamatsu H."/>
            <person name="Tanahashi N."/>
            <person name="Shimizu Y."/>
            <person name="Tanaka K."/>
            <person name="Toh-e A."/>
        </authorList>
    </citation>
    <scope>CHARACTERIZATION</scope>
</reference>
<reference key="6">
    <citation type="journal article" date="2003" name="Arch. Biochem. Biophys.">
        <title>N-terminal modifications of the 19S regulatory particle subunits of the yeast proteasome.</title>
        <authorList>
            <person name="Kimura Y."/>
            <person name="Saeki Y."/>
            <person name="Yokosawa H."/>
            <person name="Polevoda B."/>
            <person name="Sherman F."/>
            <person name="Hirano H."/>
        </authorList>
    </citation>
    <scope>PROTEIN SEQUENCE OF 2-8</scope>
</reference>
<reference key="7">
    <citation type="journal article" date="2003" name="Nature">
        <title>Global analysis of protein expression in yeast.</title>
        <authorList>
            <person name="Ghaemmaghami S."/>
            <person name="Huh W.-K."/>
            <person name="Bower K."/>
            <person name="Howson R.W."/>
            <person name="Belle A."/>
            <person name="Dephoure N."/>
            <person name="O'Shea E.K."/>
            <person name="Weissman J.S."/>
        </authorList>
    </citation>
    <scope>LEVEL OF PROTEIN EXPRESSION [LARGE SCALE ANALYSIS]</scope>
</reference>
<reference key="8">
    <citation type="journal article" date="2012" name="Proc. Natl. Acad. Sci. U.S.A.">
        <title>Near-atomic resolution structural model of the yeast 26S proteasome.</title>
        <authorList>
            <person name="Beck F."/>
            <person name="Unverdorben P."/>
            <person name="Bohn S."/>
            <person name="Schweitzer A."/>
            <person name="Pfeifer G."/>
            <person name="Sakata E."/>
            <person name="Nickell S."/>
            <person name="Plitzko J.M."/>
            <person name="Villa E."/>
            <person name="Baumeister W."/>
            <person name="Forster F."/>
        </authorList>
    </citation>
    <scope>STRUCTURE BY ELECTRON MICROSCOPY (7.4 ANGSTROMS) OF THE 26S PROTEASOME</scope>
</reference>
<evidence type="ECO:0000255" key="1">
    <source>
        <dbReference type="PROSITE-ProRule" id="PRU01185"/>
    </source>
</evidence>
<evidence type="ECO:0000269" key="2">
    <source>
    </source>
</evidence>
<evidence type="ECO:0000269" key="3">
    <source>
    </source>
</evidence>
<evidence type="ECO:0000305" key="4"/>
<evidence type="ECO:0007829" key="5">
    <source>
        <dbReference type="PDB" id="3JCK"/>
    </source>
</evidence>
<accession>P32496</accession>
<accession>D6VTT5</accession>
<sequence>MPSLAELTKSLSIAFENGDYAACEKLLPPIKIELIKNNLLIPDLSIQNDIYLNDLMITKRILEVGALASIQTFNFDSFENYFNQLKPYYFSNNHKLSESDKKSKLISLYLLNLLSQNNTTKFHSELQYLDKHIKNLEDDSLLSYPIKLDRWLMEGSYQKAWDLLQSGSQNISEFDSFTDILKSAIRDEIAKNTELSYDFLPLSNIKALLFFNNEKETEKFALERNWPIVNSKVYFNNQSKEKADYEDEMMHEEDQKTNIIEKAMDYAISIENIV</sequence>
<name>RPN12_YEAST</name>
<keyword id="KW-0002">3D-structure</keyword>
<keyword id="KW-0903">Direct protein sequencing</keyword>
<keyword id="KW-0647">Proteasome</keyword>
<keyword id="KW-1185">Reference proteome</keyword>
<gene>
    <name type="primary">RPN12</name>
    <name type="synonym">NIN1</name>
    <name type="ordered locus">YFR052W</name>
</gene>